<gene>
    <name evidence="1" type="primary">lexA1</name>
    <name type="synonym">lexA-2</name>
    <name type="ordered locus">PSPTO_3510</name>
</gene>
<feature type="chain" id="PRO_0000170072" description="LexA repressor 1">
    <location>
        <begin position="1"/>
        <end position="202"/>
    </location>
</feature>
<feature type="DNA-binding region" description="H-T-H motif" evidence="1">
    <location>
        <begin position="28"/>
        <end position="48"/>
    </location>
</feature>
<feature type="active site" description="For autocatalytic cleavage activity" evidence="1">
    <location>
        <position position="123"/>
    </location>
</feature>
<feature type="active site" description="For autocatalytic cleavage activity" evidence="1">
    <location>
        <position position="160"/>
    </location>
</feature>
<feature type="site" description="Cleavage; by autolysis" evidence="1">
    <location>
        <begin position="88"/>
        <end position="89"/>
    </location>
</feature>
<reference key="1">
    <citation type="journal article" date="2003" name="Proc. Natl. Acad. Sci. U.S.A.">
        <title>The complete genome sequence of the Arabidopsis and tomato pathogen Pseudomonas syringae pv. tomato DC3000.</title>
        <authorList>
            <person name="Buell C.R."/>
            <person name="Joardar V."/>
            <person name="Lindeberg M."/>
            <person name="Selengut J."/>
            <person name="Paulsen I.T."/>
            <person name="Gwinn M.L."/>
            <person name="Dodson R.J."/>
            <person name="DeBoy R.T."/>
            <person name="Durkin A.S."/>
            <person name="Kolonay J.F."/>
            <person name="Madupu R."/>
            <person name="Daugherty S.C."/>
            <person name="Brinkac L.M."/>
            <person name="Beanan M.J."/>
            <person name="Haft D.H."/>
            <person name="Nelson W.C."/>
            <person name="Davidsen T.M."/>
            <person name="Zafar N."/>
            <person name="Zhou L."/>
            <person name="Liu J."/>
            <person name="Yuan Q."/>
            <person name="Khouri H.M."/>
            <person name="Fedorova N.B."/>
            <person name="Tran B."/>
            <person name="Russell D."/>
            <person name="Berry K.J."/>
            <person name="Utterback T.R."/>
            <person name="Van Aken S.E."/>
            <person name="Feldblyum T.V."/>
            <person name="D'Ascenzo M."/>
            <person name="Deng W.-L."/>
            <person name="Ramos A.R."/>
            <person name="Alfano J.R."/>
            <person name="Cartinhour S."/>
            <person name="Chatterjee A.K."/>
            <person name="Delaney T.P."/>
            <person name="Lazarowitz S.G."/>
            <person name="Martin G.B."/>
            <person name="Schneider D.J."/>
            <person name="Tang X."/>
            <person name="Bender C.L."/>
            <person name="White O."/>
            <person name="Fraser C.M."/>
            <person name="Collmer A."/>
        </authorList>
    </citation>
    <scope>NUCLEOTIDE SEQUENCE [LARGE SCALE GENOMIC DNA]</scope>
    <source>
        <strain>ATCC BAA-871 / DC3000</strain>
    </source>
</reference>
<evidence type="ECO:0000255" key="1">
    <source>
        <dbReference type="HAMAP-Rule" id="MF_00015"/>
    </source>
</evidence>
<sequence length="202" mass="22150">MIKLTPRQAEILGFIKRCLEDNGFPPTRAEIAQELGFKSPNAAEEHLKALARKGAIEMTPGASRGIRIPGFEARPDESSLPVIGRVAAGAPILAQQHIEESCNINPSFFHPSANYLLRVHGMSMKDVGILDGDLLAVHTTREARNGQIVVARIGDEVTVKRFKREGSKVWLLAENPDFAPIEVDLKDQELVIEGLSVGVIRR</sequence>
<protein>
    <recommendedName>
        <fullName evidence="1">LexA repressor 1</fullName>
        <ecNumber evidence="1">3.4.21.88</ecNumber>
    </recommendedName>
</protein>
<proteinExistence type="inferred from homology"/>
<keyword id="KW-0068">Autocatalytic cleavage</keyword>
<keyword id="KW-0227">DNA damage</keyword>
<keyword id="KW-0234">DNA repair</keyword>
<keyword id="KW-0235">DNA replication</keyword>
<keyword id="KW-0238">DNA-binding</keyword>
<keyword id="KW-0378">Hydrolase</keyword>
<keyword id="KW-1185">Reference proteome</keyword>
<keyword id="KW-0678">Repressor</keyword>
<keyword id="KW-0742">SOS response</keyword>
<keyword id="KW-0804">Transcription</keyword>
<keyword id="KW-0805">Transcription regulation</keyword>
<name>LEXA1_PSESM</name>
<accession>Q87ZB9</accession>
<organism>
    <name type="scientific">Pseudomonas syringae pv. tomato (strain ATCC BAA-871 / DC3000)</name>
    <dbReference type="NCBI Taxonomy" id="223283"/>
    <lineage>
        <taxon>Bacteria</taxon>
        <taxon>Pseudomonadati</taxon>
        <taxon>Pseudomonadota</taxon>
        <taxon>Gammaproteobacteria</taxon>
        <taxon>Pseudomonadales</taxon>
        <taxon>Pseudomonadaceae</taxon>
        <taxon>Pseudomonas</taxon>
    </lineage>
</organism>
<comment type="function">
    <text evidence="1">Represses a number of genes involved in the response to DNA damage (SOS response), including recA and lexA. In the presence of single-stranded DNA, RecA interacts with LexA causing an autocatalytic cleavage which disrupts the DNA-binding part of LexA, leading to derepression of the SOS regulon and eventually DNA repair.</text>
</comment>
<comment type="catalytic activity">
    <reaction evidence="1">
        <text>Hydrolysis of Ala-|-Gly bond in repressor LexA.</text>
        <dbReference type="EC" id="3.4.21.88"/>
    </reaction>
</comment>
<comment type="subunit">
    <text evidence="1">Homodimer.</text>
</comment>
<comment type="similarity">
    <text evidence="1">Belongs to the peptidase S24 family.</text>
</comment>
<dbReference type="EC" id="3.4.21.88" evidence="1"/>
<dbReference type="EMBL" id="AE016853">
    <property type="protein sequence ID" value="AAO56985.1"/>
    <property type="molecule type" value="Genomic_DNA"/>
</dbReference>
<dbReference type="RefSeq" id="NP_793290.1">
    <property type="nucleotide sequence ID" value="NC_004578.1"/>
</dbReference>
<dbReference type="SMR" id="Q87ZB9"/>
<dbReference type="STRING" id="223283.PSPTO_3510"/>
<dbReference type="MEROPS" id="S24.001"/>
<dbReference type="KEGG" id="pst:PSPTO_3510"/>
<dbReference type="PATRIC" id="fig|223283.9.peg.3595"/>
<dbReference type="eggNOG" id="COG1974">
    <property type="taxonomic scope" value="Bacteria"/>
</dbReference>
<dbReference type="HOGENOM" id="CLU_066192_45_3_6"/>
<dbReference type="OrthoDB" id="9802364at2"/>
<dbReference type="PhylomeDB" id="Q87ZB9"/>
<dbReference type="Proteomes" id="UP000002515">
    <property type="component" value="Chromosome"/>
</dbReference>
<dbReference type="GO" id="GO:0003677">
    <property type="term" value="F:DNA binding"/>
    <property type="evidence" value="ECO:0007669"/>
    <property type="project" value="UniProtKB-UniRule"/>
</dbReference>
<dbReference type="GO" id="GO:0004252">
    <property type="term" value="F:serine-type endopeptidase activity"/>
    <property type="evidence" value="ECO:0007669"/>
    <property type="project" value="UniProtKB-UniRule"/>
</dbReference>
<dbReference type="GO" id="GO:0006281">
    <property type="term" value="P:DNA repair"/>
    <property type="evidence" value="ECO:0007669"/>
    <property type="project" value="UniProtKB-UniRule"/>
</dbReference>
<dbReference type="GO" id="GO:0006260">
    <property type="term" value="P:DNA replication"/>
    <property type="evidence" value="ECO:0007669"/>
    <property type="project" value="UniProtKB-UniRule"/>
</dbReference>
<dbReference type="GO" id="GO:0045892">
    <property type="term" value="P:negative regulation of DNA-templated transcription"/>
    <property type="evidence" value="ECO:0007669"/>
    <property type="project" value="UniProtKB-UniRule"/>
</dbReference>
<dbReference type="GO" id="GO:0006508">
    <property type="term" value="P:proteolysis"/>
    <property type="evidence" value="ECO:0007669"/>
    <property type="project" value="InterPro"/>
</dbReference>
<dbReference type="GO" id="GO:0009432">
    <property type="term" value="P:SOS response"/>
    <property type="evidence" value="ECO:0007669"/>
    <property type="project" value="UniProtKB-UniRule"/>
</dbReference>
<dbReference type="CDD" id="cd06529">
    <property type="entry name" value="S24_LexA-like"/>
    <property type="match status" value="1"/>
</dbReference>
<dbReference type="FunFam" id="1.10.10.10:FF:000009">
    <property type="entry name" value="LexA repressor"/>
    <property type="match status" value="1"/>
</dbReference>
<dbReference type="FunFam" id="2.10.109.10:FF:000001">
    <property type="entry name" value="LexA repressor"/>
    <property type="match status" value="1"/>
</dbReference>
<dbReference type="Gene3D" id="2.10.109.10">
    <property type="entry name" value="Umud Fragment, subunit A"/>
    <property type="match status" value="1"/>
</dbReference>
<dbReference type="Gene3D" id="1.10.10.10">
    <property type="entry name" value="Winged helix-like DNA-binding domain superfamily/Winged helix DNA-binding domain"/>
    <property type="match status" value="1"/>
</dbReference>
<dbReference type="HAMAP" id="MF_00015">
    <property type="entry name" value="LexA"/>
    <property type="match status" value="1"/>
</dbReference>
<dbReference type="InterPro" id="IPR006200">
    <property type="entry name" value="LexA"/>
</dbReference>
<dbReference type="InterPro" id="IPR039418">
    <property type="entry name" value="LexA-like"/>
</dbReference>
<dbReference type="InterPro" id="IPR036286">
    <property type="entry name" value="LexA/Signal_pep-like_sf"/>
</dbReference>
<dbReference type="InterPro" id="IPR006199">
    <property type="entry name" value="LexA_DNA-bd_dom"/>
</dbReference>
<dbReference type="InterPro" id="IPR050077">
    <property type="entry name" value="LexA_repressor"/>
</dbReference>
<dbReference type="InterPro" id="IPR006197">
    <property type="entry name" value="Peptidase_S24_LexA"/>
</dbReference>
<dbReference type="InterPro" id="IPR015927">
    <property type="entry name" value="Peptidase_S24_S26A/B/C"/>
</dbReference>
<dbReference type="InterPro" id="IPR036388">
    <property type="entry name" value="WH-like_DNA-bd_sf"/>
</dbReference>
<dbReference type="InterPro" id="IPR036390">
    <property type="entry name" value="WH_DNA-bd_sf"/>
</dbReference>
<dbReference type="NCBIfam" id="TIGR00498">
    <property type="entry name" value="lexA"/>
    <property type="match status" value="1"/>
</dbReference>
<dbReference type="PANTHER" id="PTHR33516">
    <property type="entry name" value="LEXA REPRESSOR"/>
    <property type="match status" value="1"/>
</dbReference>
<dbReference type="PANTHER" id="PTHR33516:SF2">
    <property type="entry name" value="LEXA REPRESSOR-RELATED"/>
    <property type="match status" value="1"/>
</dbReference>
<dbReference type="Pfam" id="PF01726">
    <property type="entry name" value="LexA_DNA_bind"/>
    <property type="match status" value="1"/>
</dbReference>
<dbReference type="Pfam" id="PF00717">
    <property type="entry name" value="Peptidase_S24"/>
    <property type="match status" value="1"/>
</dbReference>
<dbReference type="PRINTS" id="PR00726">
    <property type="entry name" value="LEXASERPTASE"/>
</dbReference>
<dbReference type="SUPFAM" id="SSF51306">
    <property type="entry name" value="LexA/Signal peptidase"/>
    <property type="match status" value="1"/>
</dbReference>
<dbReference type="SUPFAM" id="SSF46785">
    <property type="entry name" value="Winged helix' DNA-binding domain"/>
    <property type="match status" value="1"/>
</dbReference>